<feature type="chain" id="PRO_0000332851" description="Cysteine--tRNA ligase">
    <location>
        <begin position="1"/>
        <end position="461"/>
    </location>
</feature>
<feature type="short sequence motif" description="'HIGH' region">
    <location>
        <begin position="31"/>
        <end position="41"/>
    </location>
</feature>
<feature type="short sequence motif" description="'KMSKS' region">
    <location>
        <begin position="274"/>
        <end position="278"/>
    </location>
</feature>
<feature type="binding site" evidence="1">
    <location>
        <position position="29"/>
    </location>
    <ligand>
        <name>Zn(2+)</name>
        <dbReference type="ChEBI" id="CHEBI:29105"/>
    </ligand>
</feature>
<feature type="binding site" evidence="1">
    <location>
        <position position="213"/>
    </location>
    <ligand>
        <name>Zn(2+)</name>
        <dbReference type="ChEBI" id="CHEBI:29105"/>
    </ligand>
</feature>
<feature type="binding site" evidence="1">
    <location>
        <position position="238"/>
    </location>
    <ligand>
        <name>Zn(2+)</name>
        <dbReference type="ChEBI" id="CHEBI:29105"/>
    </ligand>
</feature>
<feature type="binding site" evidence="1">
    <location>
        <position position="242"/>
    </location>
    <ligand>
        <name>Zn(2+)</name>
        <dbReference type="ChEBI" id="CHEBI:29105"/>
    </ligand>
</feature>
<feature type="binding site" evidence="1">
    <location>
        <position position="277"/>
    </location>
    <ligand>
        <name>ATP</name>
        <dbReference type="ChEBI" id="CHEBI:30616"/>
    </ligand>
</feature>
<evidence type="ECO:0000255" key="1">
    <source>
        <dbReference type="HAMAP-Rule" id="MF_00041"/>
    </source>
</evidence>
<evidence type="ECO:0000305" key="2"/>
<comment type="catalytic activity">
    <reaction evidence="1">
        <text>tRNA(Cys) + L-cysteine + ATP = L-cysteinyl-tRNA(Cys) + AMP + diphosphate</text>
        <dbReference type="Rhea" id="RHEA:17773"/>
        <dbReference type="Rhea" id="RHEA-COMP:9661"/>
        <dbReference type="Rhea" id="RHEA-COMP:9679"/>
        <dbReference type="ChEBI" id="CHEBI:30616"/>
        <dbReference type="ChEBI" id="CHEBI:33019"/>
        <dbReference type="ChEBI" id="CHEBI:35235"/>
        <dbReference type="ChEBI" id="CHEBI:78442"/>
        <dbReference type="ChEBI" id="CHEBI:78517"/>
        <dbReference type="ChEBI" id="CHEBI:456215"/>
        <dbReference type="EC" id="6.1.1.16"/>
    </reaction>
</comment>
<comment type="cofactor">
    <cofactor evidence="1">
        <name>Zn(2+)</name>
        <dbReference type="ChEBI" id="CHEBI:29105"/>
    </cofactor>
    <text evidence="1">Binds 1 zinc ion per subunit.</text>
</comment>
<comment type="subunit">
    <text evidence="1">Monomer.</text>
</comment>
<comment type="subcellular location">
    <subcellularLocation>
        <location evidence="1">Cytoplasm</location>
    </subcellularLocation>
</comment>
<comment type="similarity">
    <text evidence="1">Belongs to the class-I aminoacyl-tRNA synthetase family.</text>
</comment>
<comment type="sequence caution" evidence="2">
    <conflict type="erroneous initiation">
        <sequence resource="EMBL-CDS" id="ABM95411"/>
    </conflict>
</comment>
<name>SYC_METPP</name>
<reference key="1">
    <citation type="journal article" date="2007" name="J. Bacteriol.">
        <title>Whole-genome analysis of the methyl tert-butyl ether-degrading beta-proteobacterium Methylibium petroleiphilum PM1.</title>
        <authorList>
            <person name="Kane S.R."/>
            <person name="Chakicherla A.Y."/>
            <person name="Chain P.S.G."/>
            <person name="Schmidt R."/>
            <person name="Shin M.W."/>
            <person name="Legler T.C."/>
            <person name="Scow K.M."/>
            <person name="Larimer F.W."/>
            <person name="Lucas S.M."/>
            <person name="Richardson P.M."/>
            <person name="Hristova K.R."/>
        </authorList>
    </citation>
    <scope>NUCLEOTIDE SEQUENCE [LARGE SCALE GENOMIC DNA]</scope>
    <source>
        <strain>ATCC BAA-1232 / LMG 22953 / PM1</strain>
    </source>
</reference>
<proteinExistence type="inferred from homology"/>
<keyword id="KW-0030">Aminoacyl-tRNA synthetase</keyword>
<keyword id="KW-0067">ATP-binding</keyword>
<keyword id="KW-0963">Cytoplasm</keyword>
<keyword id="KW-0436">Ligase</keyword>
<keyword id="KW-0479">Metal-binding</keyword>
<keyword id="KW-0547">Nucleotide-binding</keyword>
<keyword id="KW-0648">Protein biosynthesis</keyword>
<keyword id="KW-1185">Reference proteome</keyword>
<keyword id="KW-0862">Zinc</keyword>
<accession>A2SIM2</accession>
<protein>
    <recommendedName>
        <fullName evidence="1">Cysteine--tRNA ligase</fullName>
        <ecNumber evidence="1">6.1.1.16</ecNumber>
    </recommendedName>
    <alternativeName>
        <fullName evidence="1">Cysteinyl-tRNA synthetase</fullName>
        <shortName evidence="1">CysRS</shortName>
    </alternativeName>
</protein>
<gene>
    <name evidence="1" type="primary">cysS</name>
    <name type="ordered locus">Mpe_A2456</name>
</gene>
<sequence>MSLRIHNTLTRSTEAFSPIEPGHVRMYVCGMTIYDLCHVGHARMMMAFDVVQRWLRVSGLRVTYVRNITDIDDKIIKRALERGIPIRQLTDEMTAAMHQDIGALGIEPPTHEPRATEYVGAMVGLIEVLERNGLAYRVPGGDVNYSVRKFPGYGRLSGKSIDALRAGERVAVLEGKDDPLDFVLWKAAKPEEPADAKYDAPFGPGRPGWHIECSAMSHALLGERFDIHGGGMDLQFPHHENEIAQSDGAFHLGSGHSFVNVWMHNGFLNVDNEKMSKSLGNFFTIRDILKRYDGETIRFFMLRVHYRSPFNFSDAGLDDARSGLRRLYTALEGTAVAPAEIDWTDPHAARFKAAMDDDFNTPIAVSVLFDLAGEVNRSRSAQSAGLLRSLAGTLGLLQQEAAQYLQGGSGVDTGHIEAQIAARAAAKAARDFAESDRIRDALAAQGIVLKDTPAGTTWVKA</sequence>
<organism>
    <name type="scientific">Methylibium petroleiphilum (strain ATCC BAA-1232 / LMG 22953 / PM1)</name>
    <dbReference type="NCBI Taxonomy" id="420662"/>
    <lineage>
        <taxon>Bacteria</taxon>
        <taxon>Pseudomonadati</taxon>
        <taxon>Pseudomonadota</taxon>
        <taxon>Betaproteobacteria</taxon>
        <taxon>Burkholderiales</taxon>
        <taxon>Sphaerotilaceae</taxon>
        <taxon>Methylibium</taxon>
    </lineage>
</organism>
<dbReference type="EC" id="6.1.1.16" evidence="1"/>
<dbReference type="EMBL" id="CP000555">
    <property type="protein sequence ID" value="ABM95411.1"/>
    <property type="status" value="ALT_INIT"/>
    <property type="molecule type" value="Genomic_DNA"/>
</dbReference>
<dbReference type="RefSeq" id="WP_036235430.1">
    <property type="nucleotide sequence ID" value="NC_008825.1"/>
</dbReference>
<dbReference type="SMR" id="A2SIM2"/>
<dbReference type="STRING" id="420662.Mpe_A2456"/>
<dbReference type="KEGG" id="mpt:Mpe_A2456"/>
<dbReference type="eggNOG" id="COG0215">
    <property type="taxonomic scope" value="Bacteria"/>
</dbReference>
<dbReference type="HOGENOM" id="CLU_013528_0_1_4"/>
<dbReference type="Proteomes" id="UP000000366">
    <property type="component" value="Chromosome"/>
</dbReference>
<dbReference type="GO" id="GO:0005829">
    <property type="term" value="C:cytosol"/>
    <property type="evidence" value="ECO:0007669"/>
    <property type="project" value="TreeGrafter"/>
</dbReference>
<dbReference type="GO" id="GO:0005524">
    <property type="term" value="F:ATP binding"/>
    <property type="evidence" value="ECO:0007669"/>
    <property type="project" value="UniProtKB-UniRule"/>
</dbReference>
<dbReference type="GO" id="GO:0004817">
    <property type="term" value="F:cysteine-tRNA ligase activity"/>
    <property type="evidence" value="ECO:0007669"/>
    <property type="project" value="UniProtKB-UniRule"/>
</dbReference>
<dbReference type="GO" id="GO:0008270">
    <property type="term" value="F:zinc ion binding"/>
    <property type="evidence" value="ECO:0007669"/>
    <property type="project" value="UniProtKB-UniRule"/>
</dbReference>
<dbReference type="GO" id="GO:0006423">
    <property type="term" value="P:cysteinyl-tRNA aminoacylation"/>
    <property type="evidence" value="ECO:0007669"/>
    <property type="project" value="UniProtKB-UniRule"/>
</dbReference>
<dbReference type="CDD" id="cd07963">
    <property type="entry name" value="Anticodon_Ia_Cys"/>
    <property type="match status" value="1"/>
</dbReference>
<dbReference type="CDD" id="cd00672">
    <property type="entry name" value="CysRS_core"/>
    <property type="match status" value="1"/>
</dbReference>
<dbReference type="FunFam" id="3.40.50.620:FF:000009">
    <property type="entry name" value="Cysteine--tRNA ligase"/>
    <property type="match status" value="1"/>
</dbReference>
<dbReference type="Gene3D" id="1.20.120.1910">
    <property type="entry name" value="Cysteine-tRNA ligase, C-terminal anti-codon recognition domain"/>
    <property type="match status" value="1"/>
</dbReference>
<dbReference type="Gene3D" id="3.40.50.620">
    <property type="entry name" value="HUPs"/>
    <property type="match status" value="1"/>
</dbReference>
<dbReference type="HAMAP" id="MF_00041">
    <property type="entry name" value="Cys_tRNA_synth"/>
    <property type="match status" value="1"/>
</dbReference>
<dbReference type="InterPro" id="IPR015803">
    <property type="entry name" value="Cys-tRNA-ligase"/>
</dbReference>
<dbReference type="InterPro" id="IPR015273">
    <property type="entry name" value="Cys-tRNA-synt_Ia_DALR"/>
</dbReference>
<dbReference type="InterPro" id="IPR024909">
    <property type="entry name" value="Cys-tRNA/MSH_ligase"/>
</dbReference>
<dbReference type="InterPro" id="IPR056411">
    <property type="entry name" value="CysS_C"/>
</dbReference>
<dbReference type="InterPro" id="IPR014729">
    <property type="entry name" value="Rossmann-like_a/b/a_fold"/>
</dbReference>
<dbReference type="InterPro" id="IPR032678">
    <property type="entry name" value="tRNA-synt_1_cat_dom"/>
</dbReference>
<dbReference type="InterPro" id="IPR009080">
    <property type="entry name" value="tRNAsynth_Ia_anticodon-bd"/>
</dbReference>
<dbReference type="NCBIfam" id="TIGR00435">
    <property type="entry name" value="cysS"/>
    <property type="match status" value="1"/>
</dbReference>
<dbReference type="PANTHER" id="PTHR10890:SF3">
    <property type="entry name" value="CYSTEINE--TRNA LIGASE, CYTOPLASMIC"/>
    <property type="match status" value="1"/>
</dbReference>
<dbReference type="PANTHER" id="PTHR10890">
    <property type="entry name" value="CYSTEINYL-TRNA SYNTHETASE"/>
    <property type="match status" value="1"/>
</dbReference>
<dbReference type="Pfam" id="PF23493">
    <property type="entry name" value="CysS_C"/>
    <property type="match status" value="1"/>
</dbReference>
<dbReference type="Pfam" id="PF09190">
    <property type="entry name" value="DALR_2"/>
    <property type="match status" value="1"/>
</dbReference>
<dbReference type="Pfam" id="PF01406">
    <property type="entry name" value="tRNA-synt_1e"/>
    <property type="match status" value="1"/>
</dbReference>
<dbReference type="PRINTS" id="PR00983">
    <property type="entry name" value="TRNASYNTHCYS"/>
</dbReference>
<dbReference type="SMART" id="SM00840">
    <property type="entry name" value="DALR_2"/>
    <property type="match status" value="1"/>
</dbReference>
<dbReference type="SUPFAM" id="SSF47323">
    <property type="entry name" value="Anticodon-binding domain of a subclass of class I aminoacyl-tRNA synthetases"/>
    <property type="match status" value="1"/>
</dbReference>
<dbReference type="SUPFAM" id="SSF52374">
    <property type="entry name" value="Nucleotidylyl transferase"/>
    <property type="match status" value="1"/>
</dbReference>